<organism>
    <name type="scientific">Paraclostridium bifermentans</name>
    <name type="common">Clostridium bifermentans</name>
    <dbReference type="NCBI Taxonomy" id="1490"/>
    <lineage>
        <taxon>Bacteria</taxon>
        <taxon>Bacillati</taxon>
        <taxon>Bacillota</taxon>
        <taxon>Clostridia</taxon>
        <taxon>Peptostreptococcales</taxon>
        <taxon>Peptostreptococcaceae</taxon>
        <taxon>Paraclostridium</taxon>
    </lineage>
</organism>
<feature type="chain" id="PRO_0000196309" description="Small, acid-soluble spore protein alpha">
    <location>
        <begin position="1"/>
        <end position="70"/>
    </location>
</feature>
<feature type="site" description="Cleavage; by spore protease">
    <location>
        <begin position="23"/>
        <end position="24"/>
    </location>
</feature>
<protein>
    <recommendedName>
        <fullName>Small, acid-soluble spore protein alpha</fullName>
        <shortName>ASSP</shortName>
        <shortName>SASP</shortName>
    </recommendedName>
</protein>
<dbReference type="PIR" id="A61028">
    <property type="entry name" value="A61028"/>
</dbReference>
<dbReference type="SMR" id="P22065"/>
<dbReference type="eggNOG" id="ENOG5032YCI">
    <property type="taxonomic scope" value="Bacteria"/>
</dbReference>
<dbReference type="GO" id="GO:0003690">
    <property type="term" value="F:double-stranded DNA binding"/>
    <property type="evidence" value="ECO:0007669"/>
    <property type="project" value="InterPro"/>
</dbReference>
<dbReference type="GO" id="GO:0006265">
    <property type="term" value="P:DNA topological change"/>
    <property type="evidence" value="ECO:0007669"/>
    <property type="project" value="InterPro"/>
</dbReference>
<dbReference type="GO" id="GO:0030435">
    <property type="term" value="P:sporulation resulting in formation of a cellular spore"/>
    <property type="evidence" value="ECO:0007669"/>
    <property type="project" value="UniProtKB-KW"/>
</dbReference>
<dbReference type="Gene3D" id="6.10.10.80">
    <property type="entry name" value="Small, acid-soluble spore protein, alpha/beta type-like"/>
    <property type="match status" value="1"/>
</dbReference>
<dbReference type="InterPro" id="IPR001448">
    <property type="entry name" value="SASP_alpha/beta-type"/>
</dbReference>
<dbReference type="InterPro" id="IPR018126">
    <property type="entry name" value="SASP_alpha/beta-type_CS"/>
</dbReference>
<dbReference type="InterPro" id="IPR050847">
    <property type="entry name" value="SASP_DNA-binding"/>
</dbReference>
<dbReference type="InterPro" id="IPR038300">
    <property type="entry name" value="SASP_sf_alpha/beta"/>
</dbReference>
<dbReference type="PANTHER" id="PTHR36107">
    <property type="entry name" value="SMALL, ACID-SOLUBLE SPORE PROTEIN A"/>
    <property type="match status" value="1"/>
</dbReference>
<dbReference type="PANTHER" id="PTHR36107:SF1">
    <property type="entry name" value="SMALL, ACID-SOLUBLE SPORE PROTEIN A"/>
    <property type="match status" value="1"/>
</dbReference>
<dbReference type="Pfam" id="PF00269">
    <property type="entry name" value="SASP"/>
    <property type="match status" value="1"/>
</dbReference>
<dbReference type="PROSITE" id="PS00304">
    <property type="entry name" value="SASP_1"/>
    <property type="match status" value="1"/>
</dbReference>
<dbReference type="PROSITE" id="PS00684">
    <property type="entry name" value="SASP_2"/>
    <property type="match status" value="1"/>
</dbReference>
<reference key="1">
    <citation type="journal article" date="1989" name="FEMS Microbiol. Lett.">
        <title>Purification and amino acid sequence of two small, acid-soluble proteins from Clostridium bifermentans spores.</title>
        <authorList>
            <person name="Cabrera-Martinez R.M."/>
            <person name="Mason J.M."/>
            <person name="Setlow B."/>
            <person name="Waites W.M."/>
            <person name="Setlow P."/>
        </authorList>
    </citation>
    <scope>PROTEIN SEQUENCE</scope>
</reference>
<evidence type="ECO:0000305" key="1"/>
<sequence>TTNNNNTKAVPEAKAALKQMKLEIANELGISNYDTADKGNMTARQNGYVGGYMTKKLVEMAEQQMSGQQR</sequence>
<comment type="function">
    <text>SASP are bound to spore DNA. They are double-stranded DNA-binding proteins that cause DNA to change to an a-like conformation. They protect the DNA backbone from chemical and enzymatic cleavage and are thus involved in dormant spore's high resistance to UV light.</text>
</comment>
<comment type="miscellaneous">
    <text>SASP are degraded in the first minutes of spore germination and provide amino acids for both new protein synthesis and metabolism.</text>
</comment>
<comment type="similarity">
    <text evidence="1">Belongs to the alpha/beta-type SASP family.</text>
</comment>
<keyword id="KW-0903">Direct protein sequencing</keyword>
<keyword id="KW-0238">DNA-binding</keyword>
<keyword id="KW-0749">Sporulation</keyword>
<accession>P22065</accession>
<name>SAS1_PARBF</name>
<proteinExistence type="evidence at protein level"/>